<protein>
    <recommendedName>
        <fullName evidence="1">Gamma-aminobutyric acid receptor subunit alpha-5</fullName>
    </recommendedName>
    <alternativeName>
        <fullName evidence="2">GABA(A) receptor subunit alpha-5</fullName>
        <shortName>GABAAR subunit alpha-5</shortName>
    </alternativeName>
</protein>
<keyword id="KW-1003">Cell membrane</keyword>
<keyword id="KW-0868">Chloride</keyword>
<keyword id="KW-0869">Chloride channel</keyword>
<keyword id="KW-1015">Disulfide bond</keyword>
<keyword id="KW-0325">Glycoprotein</keyword>
<keyword id="KW-0407">Ion channel</keyword>
<keyword id="KW-0406">Ion transport</keyword>
<keyword id="KW-1017">Isopeptide bond</keyword>
<keyword id="KW-1071">Ligand-gated ion channel</keyword>
<keyword id="KW-0472">Membrane</keyword>
<keyword id="KW-0628">Postsynaptic cell membrane</keyword>
<keyword id="KW-0675">Receptor</keyword>
<keyword id="KW-1185">Reference proteome</keyword>
<keyword id="KW-0732">Signal</keyword>
<keyword id="KW-0770">Synapse</keyword>
<keyword id="KW-0812">Transmembrane</keyword>
<keyword id="KW-1133">Transmembrane helix</keyword>
<keyword id="KW-0813">Transport</keyword>
<keyword id="KW-0832">Ubl conjugation</keyword>
<dbReference type="EMBL" id="BC123418">
    <property type="protein sequence ID" value="AAI23419.1"/>
    <property type="molecule type" value="mRNA"/>
</dbReference>
<dbReference type="RefSeq" id="NP_001069312.1">
    <property type="nucleotide sequence ID" value="NM_001075844.1"/>
</dbReference>
<dbReference type="RefSeq" id="XP_005221788.1">
    <property type="nucleotide sequence ID" value="XM_005221731.5"/>
</dbReference>
<dbReference type="RefSeq" id="XP_005221790.1">
    <property type="nucleotide sequence ID" value="XM_005221733.5"/>
</dbReference>
<dbReference type="RefSeq" id="XP_005221791.1">
    <property type="nucleotide sequence ID" value="XM_005221734.5"/>
</dbReference>
<dbReference type="SMR" id="Q08E50"/>
<dbReference type="FunCoup" id="Q08E50">
    <property type="interactions" value="963"/>
</dbReference>
<dbReference type="STRING" id="9913.ENSBTAP00000004397"/>
<dbReference type="GlyCosmos" id="Q08E50">
    <property type="glycosylation" value="4 sites, No reported glycans"/>
</dbReference>
<dbReference type="GlyGen" id="Q08E50">
    <property type="glycosylation" value="4 sites"/>
</dbReference>
<dbReference type="PaxDb" id="9913-ENSBTAP00000004397"/>
<dbReference type="Ensembl" id="ENSBTAT00000004397.4">
    <property type="protein sequence ID" value="ENSBTAP00000004397.3"/>
    <property type="gene ID" value="ENSBTAG00000003392.5"/>
</dbReference>
<dbReference type="GeneID" id="523515"/>
<dbReference type="KEGG" id="bta:523515"/>
<dbReference type="CTD" id="2558"/>
<dbReference type="VEuPathDB" id="HostDB:ENSBTAG00000003392"/>
<dbReference type="VGNC" id="VGNC:29194">
    <property type="gene designation" value="GABRA5"/>
</dbReference>
<dbReference type="eggNOG" id="KOG3642">
    <property type="taxonomic scope" value="Eukaryota"/>
</dbReference>
<dbReference type="GeneTree" id="ENSGT00940000156234"/>
<dbReference type="HOGENOM" id="CLU_010920_2_1_1"/>
<dbReference type="InParanoid" id="Q08E50"/>
<dbReference type="OMA" id="CFLWFPS"/>
<dbReference type="OrthoDB" id="203862at2759"/>
<dbReference type="TreeFam" id="TF315453"/>
<dbReference type="Reactome" id="R-BTA-977443">
    <property type="pathway name" value="GABA receptor activation"/>
</dbReference>
<dbReference type="Proteomes" id="UP000009136">
    <property type="component" value="Chromosome 21"/>
</dbReference>
<dbReference type="Bgee" id="ENSBTAG00000003392">
    <property type="expression patterns" value="Expressed in Ammon's horn and 25 other cell types or tissues"/>
</dbReference>
<dbReference type="GO" id="GO:0034707">
    <property type="term" value="C:chloride channel complex"/>
    <property type="evidence" value="ECO:0007669"/>
    <property type="project" value="UniProtKB-KW"/>
</dbReference>
<dbReference type="GO" id="GO:0032590">
    <property type="term" value="C:dendrite membrane"/>
    <property type="evidence" value="ECO:0000318"/>
    <property type="project" value="GO_Central"/>
</dbReference>
<dbReference type="GO" id="GO:1902711">
    <property type="term" value="C:GABA-A receptor complex"/>
    <property type="evidence" value="ECO:0000318"/>
    <property type="project" value="GO_Central"/>
</dbReference>
<dbReference type="GO" id="GO:0098794">
    <property type="term" value="C:postsynapse"/>
    <property type="evidence" value="ECO:0000318"/>
    <property type="project" value="GO_Central"/>
</dbReference>
<dbReference type="GO" id="GO:0045211">
    <property type="term" value="C:postsynaptic membrane"/>
    <property type="evidence" value="ECO:0007669"/>
    <property type="project" value="UniProtKB-SubCell"/>
</dbReference>
<dbReference type="GO" id="GO:0004890">
    <property type="term" value="F:GABA-A receptor activity"/>
    <property type="evidence" value="ECO:0000250"/>
    <property type="project" value="UniProtKB"/>
</dbReference>
<dbReference type="GO" id="GO:0022851">
    <property type="term" value="F:GABA-gated chloride ion channel activity"/>
    <property type="evidence" value="ECO:0000250"/>
    <property type="project" value="UniProtKB"/>
</dbReference>
<dbReference type="GO" id="GO:1902476">
    <property type="term" value="P:chloride transmembrane transport"/>
    <property type="evidence" value="ECO:0000318"/>
    <property type="project" value="GO_Central"/>
</dbReference>
<dbReference type="GO" id="GO:0007214">
    <property type="term" value="P:gamma-aminobutyric acid signaling pathway"/>
    <property type="evidence" value="ECO:0000318"/>
    <property type="project" value="GO_Central"/>
</dbReference>
<dbReference type="GO" id="GO:1904862">
    <property type="term" value="P:inhibitory synapse assembly"/>
    <property type="evidence" value="ECO:0000318"/>
    <property type="project" value="GO_Central"/>
</dbReference>
<dbReference type="GO" id="GO:0051932">
    <property type="term" value="P:synaptic transmission, GABAergic"/>
    <property type="evidence" value="ECO:0000318"/>
    <property type="project" value="GO_Central"/>
</dbReference>
<dbReference type="CDD" id="cd19038">
    <property type="entry name" value="LGIC_ECD_GABAAR_A5"/>
    <property type="match status" value="1"/>
</dbReference>
<dbReference type="CDD" id="cd19052">
    <property type="entry name" value="LGIC_TM_GABAAR_alpha"/>
    <property type="match status" value="1"/>
</dbReference>
<dbReference type="FunFam" id="2.70.170.10:FF:000001">
    <property type="entry name" value="Gamma-aminobutyric acid A receptor subunit alpha-2"/>
    <property type="match status" value="1"/>
</dbReference>
<dbReference type="FunFam" id="1.20.58.390:FF:000002">
    <property type="entry name" value="Putative gamma-aminobutyric acid receptor subunit alpha-5"/>
    <property type="match status" value="1"/>
</dbReference>
<dbReference type="Gene3D" id="2.70.170.10">
    <property type="entry name" value="Neurotransmitter-gated ion-channel ligand-binding domain"/>
    <property type="match status" value="1"/>
</dbReference>
<dbReference type="Gene3D" id="1.20.58.390">
    <property type="entry name" value="Neurotransmitter-gated ion-channel transmembrane domain"/>
    <property type="match status" value="1"/>
</dbReference>
<dbReference type="InterPro" id="IPR006028">
    <property type="entry name" value="GABAA/Glycine_rcpt"/>
</dbReference>
<dbReference type="InterPro" id="IPR001390">
    <property type="entry name" value="GABAAa_rcpt"/>
</dbReference>
<dbReference type="InterPro" id="IPR005435">
    <property type="entry name" value="GABBAa5_rcpt"/>
</dbReference>
<dbReference type="InterPro" id="IPR047024">
    <property type="entry name" value="Gabra-1-6_TM"/>
</dbReference>
<dbReference type="InterPro" id="IPR006202">
    <property type="entry name" value="Neur_chan_lig-bd"/>
</dbReference>
<dbReference type="InterPro" id="IPR036734">
    <property type="entry name" value="Neur_chan_lig-bd_sf"/>
</dbReference>
<dbReference type="InterPro" id="IPR006201">
    <property type="entry name" value="Neur_channel"/>
</dbReference>
<dbReference type="InterPro" id="IPR036719">
    <property type="entry name" value="Neuro-gated_channel_TM_sf"/>
</dbReference>
<dbReference type="InterPro" id="IPR038050">
    <property type="entry name" value="Neuro_actylchol_rec"/>
</dbReference>
<dbReference type="InterPro" id="IPR006029">
    <property type="entry name" value="Neurotrans-gated_channel_TM"/>
</dbReference>
<dbReference type="InterPro" id="IPR018000">
    <property type="entry name" value="Neurotransmitter_ion_chnl_CS"/>
</dbReference>
<dbReference type="NCBIfam" id="TIGR00860">
    <property type="entry name" value="LIC"/>
    <property type="match status" value="1"/>
</dbReference>
<dbReference type="PANTHER" id="PTHR18945">
    <property type="entry name" value="NEUROTRANSMITTER GATED ION CHANNEL"/>
    <property type="match status" value="1"/>
</dbReference>
<dbReference type="Pfam" id="PF02931">
    <property type="entry name" value="Neur_chan_LBD"/>
    <property type="match status" value="1"/>
</dbReference>
<dbReference type="Pfam" id="PF02932">
    <property type="entry name" value="Neur_chan_memb"/>
    <property type="match status" value="1"/>
</dbReference>
<dbReference type="PRINTS" id="PR01079">
    <property type="entry name" value="GABAARALPHA"/>
</dbReference>
<dbReference type="PRINTS" id="PR01618">
    <property type="entry name" value="GABAARALPHA5"/>
</dbReference>
<dbReference type="PRINTS" id="PR00253">
    <property type="entry name" value="GABAARECEPTR"/>
</dbReference>
<dbReference type="PRINTS" id="PR00252">
    <property type="entry name" value="NRIONCHANNEL"/>
</dbReference>
<dbReference type="SUPFAM" id="SSF90112">
    <property type="entry name" value="Neurotransmitter-gated ion-channel transmembrane pore"/>
    <property type="match status" value="1"/>
</dbReference>
<dbReference type="SUPFAM" id="SSF63712">
    <property type="entry name" value="Nicotinic receptor ligand binding domain-like"/>
    <property type="match status" value="1"/>
</dbReference>
<dbReference type="PROSITE" id="PS00236">
    <property type="entry name" value="NEUROTR_ION_CHANNEL"/>
    <property type="match status" value="1"/>
</dbReference>
<reference key="1">
    <citation type="submission" date="2006-09" db="EMBL/GenBank/DDBJ databases">
        <authorList>
            <consortium name="NIH - Mammalian Gene Collection (MGC) project"/>
        </authorList>
    </citation>
    <scope>NUCLEOTIDE SEQUENCE [LARGE SCALE MRNA]</scope>
    <source>
        <strain>Hereford</strain>
        <tissue>Thalamus</tissue>
    </source>
</reference>
<comment type="function">
    <text evidence="2 4">Alpha subunit of the heteropentameric ligand-gated chloride channel gated by gamma-aminobutyric acid (GABA), a major inhibitory neurotransmitter in the brain. GABA-gated chloride channels, also named GABA(A) receptors (GABAAR), consist of five subunits arranged around a central pore and contain GABA active binding site(s) located at the alpha and beta subunit interface(s). When activated by GABA, GABAARs selectively allow the flow of chloride anions across the cell membrane down their electrochemical gradient (By similarity). GABAARs containing alpha-5/GABRA5 subunits are mainly extrasynaptic and contribute to the tonic GABAergic inhibition in the hippocampus (By similarity). Extrasynaptic alpha-5-containing GABAARs in CA1 pyramidal neurons play a role in learning and memory processes (By similarity).</text>
</comment>
<comment type="catalytic activity">
    <reaction evidence="2">
        <text>chloride(in) = chloride(out)</text>
        <dbReference type="Rhea" id="RHEA:29823"/>
        <dbReference type="ChEBI" id="CHEBI:17996"/>
    </reaction>
</comment>
<comment type="subunit">
    <text evidence="2">Heteropentamer, formed by a combination of alpha (GABRA1-6), beta (GABRB1-3), gamma (GABRG1-3), delta (GABRD), epsilon (GABRE), rho (GABRR1-3), pi (GABRP) and theta (GABRQ) chains, each subunit exhibiting distinct physiological and pharmacological properties.</text>
</comment>
<comment type="subcellular location">
    <subcellularLocation>
        <location evidence="2">Postsynaptic cell membrane</location>
        <topology evidence="2">Multi-pass membrane protein</topology>
    </subcellularLocation>
    <subcellularLocation>
        <location evidence="2">Cell membrane</location>
        <topology evidence="2">Multi-pass membrane protein</topology>
    </subcellularLocation>
</comment>
<comment type="domain">
    <text evidence="2">GABAARs subunits share a common topological structure: a peptide sequence made up of a long extracellular N-terminal, four transmembrane domains, intracellular or cytoplasmic domain located between the third and the fourth transmembrane domains.</text>
</comment>
<comment type="similarity">
    <text evidence="7">Belongs to the ligand-gated ion channel (TC 1.A.9) family. Gamma-aminobutyric acid receptor (TC 1.A.9.5) subfamily. GABRA5 sub-subfamily.</text>
</comment>
<organism>
    <name type="scientific">Bos taurus</name>
    <name type="common">Bovine</name>
    <dbReference type="NCBI Taxonomy" id="9913"/>
    <lineage>
        <taxon>Eukaryota</taxon>
        <taxon>Metazoa</taxon>
        <taxon>Chordata</taxon>
        <taxon>Craniata</taxon>
        <taxon>Vertebrata</taxon>
        <taxon>Euteleostomi</taxon>
        <taxon>Mammalia</taxon>
        <taxon>Eutheria</taxon>
        <taxon>Laurasiatheria</taxon>
        <taxon>Artiodactyla</taxon>
        <taxon>Ruminantia</taxon>
        <taxon>Pecora</taxon>
        <taxon>Bovidae</taxon>
        <taxon>Bovinae</taxon>
        <taxon>Bos</taxon>
    </lineage>
</organism>
<evidence type="ECO:0000250" key="1">
    <source>
        <dbReference type="UniProtKB" id="P19969"/>
    </source>
</evidence>
<evidence type="ECO:0000250" key="2">
    <source>
        <dbReference type="UniProtKB" id="P31644"/>
    </source>
</evidence>
<evidence type="ECO:0000250" key="3">
    <source>
        <dbReference type="UniProtKB" id="P62813"/>
    </source>
</evidence>
<evidence type="ECO:0000250" key="4">
    <source>
        <dbReference type="UniProtKB" id="Q8BHJ7"/>
    </source>
</evidence>
<evidence type="ECO:0000255" key="5"/>
<evidence type="ECO:0000256" key="6">
    <source>
        <dbReference type="SAM" id="MobiDB-lite"/>
    </source>
</evidence>
<evidence type="ECO:0000305" key="7"/>
<accession>Q08E50</accession>
<gene>
    <name type="primary">GABRA5</name>
</gene>
<name>GBRA5_BOVIN</name>
<sequence length="462" mass="52172">MDNGMFSSFIMIKNLLLFCISMNLASHFGFSQMPTSSVKAETDDNITIFTRILDGLLDGYDNRLRPGLGERITQVRTDIYVTSFGPVSDTEMEYTIDVFFRQSWKDERLRFKGPMQRLPLNNLLASKIWTPDTFFHNGKKSIAHNMTTPNKLLRLEDDGTLLYTMRLTISAECPMQLEDFPMDAHACPLKFGSYAYPNSEVIYVWTNGTAKSVVVAEDGSRLNQYHLMGQTVGTENISTSTGEYTIMTAHFHLKRKIGYFVIQTYLPCIMTVILSQVSFWLNRESVPARTVFGVTTVLTMTTLSISARNSLPKVAYATAMDWFIAVCYAFVFSALIEFATVNYFTKRGWAWDGKKALEAAKIKKKERELTINKSTNAYTTGKMTHPPNIPKEQTPAGTTNASSASVKPEDKASENKKTYNSISKIDKMSRIIFPLLFGTFNLVYWATYLNREPVIKGATSPK</sequence>
<feature type="signal peptide" evidence="5">
    <location>
        <begin position="1"/>
        <end position="31"/>
    </location>
</feature>
<feature type="chain" id="PRO_0000282335" description="Gamma-aminobutyric acid receptor subunit alpha-5">
    <location>
        <begin position="32"/>
        <end position="462"/>
    </location>
</feature>
<feature type="topological domain" description="Extracellular" evidence="5">
    <location>
        <begin position="32"/>
        <end position="260"/>
    </location>
</feature>
<feature type="transmembrane region" description="Helical" evidence="2">
    <location>
        <begin position="261"/>
        <end position="281"/>
    </location>
</feature>
<feature type="transmembrane region" description="Helical" evidence="2">
    <location>
        <begin position="287"/>
        <end position="308"/>
    </location>
</feature>
<feature type="transmembrane region" description="Helical" evidence="2">
    <location>
        <begin position="319"/>
        <end position="340"/>
    </location>
</feature>
<feature type="topological domain" description="Cytoplasmic" evidence="5">
    <location>
        <begin position="341"/>
        <end position="427"/>
    </location>
</feature>
<feature type="transmembrane region" description="Helical" evidence="2">
    <location>
        <begin position="428"/>
        <end position="448"/>
    </location>
</feature>
<feature type="region of interest" description="Disordered" evidence="6">
    <location>
        <begin position="375"/>
        <end position="412"/>
    </location>
</feature>
<feature type="compositionally biased region" description="Polar residues" evidence="6">
    <location>
        <begin position="395"/>
        <end position="405"/>
    </location>
</feature>
<feature type="binding site" evidence="2">
    <location>
        <position position="101"/>
    </location>
    <ligand>
        <name>4-aminobutanoate</name>
        <dbReference type="ChEBI" id="CHEBI:59888"/>
        <note>ligand shared with the neighboring beta subunit GABRB3</note>
    </ligand>
</feature>
<feature type="binding site" evidence="3">
    <location>
        <position position="164"/>
    </location>
    <ligand>
        <name>4-aminobutanoate</name>
        <dbReference type="ChEBI" id="CHEBI:59888"/>
        <note>ligand shared with the neighboring beta subunit GABRB3</note>
    </ligand>
</feature>
<feature type="glycosylation site" description="N-linked (GlcNAc...) asparagine" evidence="5">
    <location>
        <position position="45"/>
    </location>
</feature>
<feature type="glycosylation site" description="N-linked (GlcNAc...) asparagine" evidence="5">
    <location>
        <position position="145"/>
    </location>
</feature>
<feature type="glycosylation site" description="N-linked (GlcNAc...) asparagine" evidence="5">
    <location>
        <position position="207"/>
    </location>
</feature>
<feature type="glycosylation site" description="N-linked (GlcNAc...) asparagine" evidence="5">
    <location>
        <position position="236"/>
    </location>
</feature>
<feature type="disulfide bond" evidence="2">
    <location>
        <begin position="173"/>
        <end position="187"/>
    </location>
</feature>
<feature type="cross-link" description="Glycyl lysine isopeptide (Lys-Gly) (interchain with G-Cter in ubiquitin)" evidence="2">
    <location>
        <position position="355"/>
    </location>
</feature>
<proteinExistence type="evidence at transcript level"/>